<gene>
    <name evidence="1" type="primary">rplV</name>
    <name type="ordered locus">ABAYE0413</name>
</gene>
<name>RL22_ACIBY</name>
<organism>
    <name type="scientific">Acinetobacter baumannii (strain AYE)</name>
    <dbReference type="NCBI Taxonomy" id="509173"/>
    <lineage>
        <taxon>Bacteria</taxon>
        <taxon>Pseudomonadati</taxon>
        <taxon>Pseudomonadota</taxon>
        <taxon>Gammaproteobacteria</taxon>
        <taxon>Moraxellales</taxon>
        <taxon>Moraxellaceae</taxon>
        <taxon>Acinetobacter</taxon>
        <taxon>Acinetobacter calcoaceticus/baumannii complex</taxon>
    </lineage>
</organism>
<accession>B0V6X3</accession>
<proteinExistence type="inferred from homology"/>
<reference key="1">
    <citation type="journal article" date="2008" name="PLoS ONE">
        <title>Comparative analysis of Acinetobacters: three genomes for three lifestyles.</title>
        <authorList>
            <person name="Vallenet D."/>
            <person name="Nordmann P."/>
            <person name="Barbe V."/>
            <person name="Poirel L."/>
            <person name="Mangenot S."/>
            <person name="Bataille E."/>
            <person name="Dossat C."/>
            <person name="Gas S."/>
            <person name="Kreimeyer A."/>
            <person name="Lenoble P."/>
            <person name="Oztas S."/>
            <person name="Poulain J."/>
            <person name="Segurens B."/>
            <person name="Robert C."/>
            <person name="Abergel C."/>
            <person name="Claverie J.-M."/>
            <person name="Raoult D."/>
            <person name="Medigue C."/>
            <person name="Weissenbach J."/>
            <person name="Cruveiller S."/>
        </authorList>
    </citation>
    <scope>NUCLEOTIDE SEQUENCE [LARGE SCALE GENOMIC DNA]</scope>
    <source>
        <strain>AYE</strain>
    </source>
</reference>
<evidence type="ECO:0000255" key="1">
    <source>
        <dbReference type="HAMAP-Rule" id="MF_01331"/>
    </source>
</evidence>
<evidence type="ECO:0000305" key="2"/>
<sequence length="110" mass="11937">MMEVTAKLRGAAISAQKARLVADLIRGKSVAHALNILNFSNKKAAVLVKKALESAIANAEHNNSLDVDDLKVSTIYVDEGMSLKRIMPRAKGRADRITKRTCHITVKVGV</sequence>
<dbReference type="EMBL" id="CU459141">
    <property type="protein sequence ID" value="CAM85387.1"/>
    <property type="molecule type" value="Genomic_DNA"/>
</dbReference>
<dbReference type="SMR" id="B0V6X3"/>
<dbReference type="EnsemblBacteria" id="CAM85387">
    <property type="protein sequence ID" value="CAM85387"/>
    <property type="gene ID" value="ABAYE0413"/>
</dbReference>
<dbReference type="KEGG" id="aby:ABAYE0413"/>
<dbReference type="HOGENOM" id="CLU_083987_3_3_6"/>
<dbReference type="GO" id="GO:0022625">
    <property type="term" value="C:cytosolic large ribosomal subunit"/>
    <property type="evidence" value="ECO:0007669"/>
    <property type="project" value="TreeGrafter"/>
</dbReference>
<dbReference type="GO" id="GO:0019843">
    <property type="term" value="F:rRNA binding"/>
    <property type="evidence" value="ECO:0007669"/>
    <property type="project" value="UniProtKB-UniRule"/>
</dbReference>
<dbReference type="GO" id="GO:0003735">
    <property type="term" value="F:structural constituent of ribosome"/>
    <property type="evidence" value="ECO:0007669"/>
    <property type="project" value="InterPro"/>
</dbReference>
<dbReference type="GO" id="GO:0006412">
    <property type="term" value="P:translation"/>
    <property type="evidence" value="ECO:0007669"/>
    <property type="project" value="UniProtKB-UniRule"/>
</dbReference>
<dbReference type="CDD" id="cd00336">
    <property type="entry name" value="Ribosomal_L22"/>
    <property type="match status" value="1"/>
</dbReference>
<dbReference type="FunFam" id="3.90.470.10:FF:000001">
    <property type="entry name" value="50S ribosomal protein L22"/>
    <property type="match status" value="1"/>
</dbReference>
<dbReference type="Gene3D" id="3.90.470.10">
    <property type="entry name" value="Ribosomal protein L22/L17"/>
    <property type="match status" value="1"/>
</dbReference>
<dbReference type="HAMAP" id="MF_01331_B">
    <property type="entry name" value="Ribosomal_uL22_B"/>
    <property type="match status" value="1"/>
</dbReference>
<dbReference type="InterPro" id="IPR001063">
    <property type="entry name" value="Ribosomal_uL22"/>
</dbReference>
<dbReference type="InterPro" id="IPR005727">
    <property type="entry name" value="Ribosomal_uL22_bac/chlpt-type"/>
</dbReference>
<dbReference type="InterPro" id="IPR047867">
    <property type="entry name" value="Ribosomal_uL22_bac/org-type"/>
</dbReference>
<dbReference type="InterPro" id="IPR018260">
    <property type="entry name" value="Ribosomal_uL22_CS"/>
</dbReference>
<dbReference type="InterPro" id="IPR036394">
    <property type="entry name" value="Ribosomal_uL22_sf"/>
</dbReference>
<dbReference type="NCBIfam" id="TIGR01044">
    <property type="entry name" value="rplV_bact"/>
    <property type="match status" value="1"/>
</dbReference>
<dbReference type="PANTHER" id="PTHR13501">
    <property type="entry name" value="CHLOROPLAST 50S RIBOSOMAL PROTEIN L22-RELATED"/>
    <property type="match status" value="1"/>
</dbReference>
<dbReference type="PANTHER" id="PTHR13501:SF8">
    <property type="entry name" value="LARGE RIBOSOMAL SUBUNIT PROTEIN UL22M"/>
    <property type="match status" value="1"/>
</dbReference>
<dbReference type="Pfam" id="PF00237">
    <property type="entry name" value="Ribosomal_L22"/>
    <property type="match status" value="1"/>
</dbReference>
<dbReference type="SUPFAM" id="SSF54843">
    <property type="entry name" value="Ribosomal protein L22"/>
    <property type="match status" value="1"/>
</dbReference>
<dbReference type="PROSITE" id="PS00464">
    <property type="entry name" value="RIBOSOMAL_L22"/>
    <property type="match status" value="1"/>
</dbReference>
<feature type="chain" id="PRO_1000142216" description="Large ribosomal subunit protein uL22">
    <location>
        <begin position="1"/>
        <end position="110"/>
    </location>
</feature>
<keyword id="KW-0687">Ribonucleoprotein</keyword>
<keyword id="KW-0689">Ribosomal protein</keyword>
<keyword id="KW-0694">RNA-binding</keyword>
<keyword id="KW-0699">rRNA-binding</keyword>
<protein>
    <recommendedName>
        <fullName evidence="1">Large ribosomal subunit protein uL22</fullName>
    </recommendedName>
    <alternativeName>
        <fullName evidence="2">50S ribosomal protein L22</fullName>
    </alternativeName>
</protein>
<comment type="function">
    <text evidence="1">This protein binds specifically to 23S rRNA; its binding is stimulated by other ribosomal proteins, e.g. L4, L17, and L20. It is important during the early stages of 50S assembly. It makes multiple contacts with different domains of the 23S rRNA in the assembled 50S subunit and ribosome (By similarity).</text>
</comment>
<comment type="function">
    <text evidence="1">The globular domain of the protein is located near the polypeptide exit tunnel on the outside of the subunit, while an extended beta-hairpin is found that lines the wall of the exit tunnel in the center of the 70S ribosome.</text>
</comment>
<comment type="subunit">
    <text evidence="1">Part of the 50S ribosomal subunit.</text>
</comment>
<comment type="similarity">
    <text evidence="1">Belongs to the universal ribosomal protein uL22 family.</text>
</comment>